<comment type="function">
    <text evidence="1">Involved in cell wall synthesis where it is required for glycosylation. Involved in cell cycle progression through cell-size checkpoint (By similarity).</text>
</comment>
<comment type="catalytic activity">
    <reaction>
        <text>alpha-D-mannose 1-phosphate + GTP + H(+) = GDP-alpha-D-mannose + diphosphate</text>
        <dbReference type="Rhea" id="RHEA:15229"/>
        <dbReference type="ChEBI" id="CHEBI:15378"/>
        <dbReference type="ChEBI" id="CHEBI:33019"/>
        <dbReference type="ChEBI" id="CHEBI:37565"/>
        <dbReference type="ChEBI" id="CHEBI:57527"/>
        <dbReference type="ChEBI" id="CHEBI:58409"/>
        <dbReference type="EC" id="2.7.7.13"/>
    </reaction>
</comment>
<comment type="pathway">
    <text>Nucleotide-sugar biosynthesis; GDP-alpha-D-mannose biosynthesis; GDP-alpha-D-mannose from alpha-D-mannose 1-phosphate (GTP route): step 1/1.</text>
</comment>
<comment type="subcellular location">
    <subcellularLocation>
        <location evidence="1">Cytoplasm</location>
    </subcellularLocation>
</comment>
<comment type="similarity">
    <text evidence="2">Belongs to the transferase hexapeptide repeat family.</text>
</comment>
<comment type="sequence caution" evidence="2">
    <conflict type="erroneous gene model prediction">
        <sequence resource="EMBL-CDS" id="EAL89641"/>
    </conflict>
</comment>
<dbReference type="EC" id="2.7.7.13"/>
<dbReference type="EMBL" id="DQ017035">
    <property type="protein sequence ID" value="AAY40351.1"/>
    <property type="molecule type" value="mRNA"/>
</dbReference>
<dbReference type="EMBL" id="AAHF01000005">
    <property type="protein sequence ID" value="EAL89641.1"/>
    <property type="status" value="ALT_SEQ"/>
    <property type="molecule type" value="Genomic_DNA"/>
</dbReference>
<dbReference type="RefSeq" id="XP_751679.1">
    <property type="nucleotide sequence ID" value="XM_746586.1"/>
</dbReference>
<dbReference type="SMR" id="Q4U3E8"/>
<dbReference type="FunCoup" id="Q4U3E8">
    <property type="interactions" value="1295"/>
</dbReference>
<dbReference type="STRING" id="330879.Q4U3E8"/>
<dbReference type="GeneID" id="3509467"/>
<dbReference type="KEGG" id="afm:AFUA_4G11510"/>
<dbReference type="VEuPathDB" id="FungiDB:Afu4g11510"/>
<dbReference type="eggNOG" id="KOG1322">
    <property type="taxonomic scope" value="Eukaryota"/>
</dbReference>
<dbReference type="HOGENOM" id="CLU_029499_0_0_1"/>
<dbReference type="InParanoid" id="Q4U3E8"/>
<dbReference type="OrthoDB" id="1733332at2759"/>
<dbReference type="BRENDA" id="2.7.7.13">
    <property type="organism ID" value="508"/>
</dbReference>
<dbReference type="UniPathway" id="UPA00126">
    <property type="reaction ID" value="UER00930"/>
</dbReference>
<dbReference type="Proteomes" id="UP000002530">
    <property type="component" value="Chromosome 4"/>
</dbReference>
<dbReference type="GO" id="GO:0005737">
    <property type="term" value="C:cytoplasm"/>
    <property type="evidence" value="ECO:0000318"/>
    <property type="project" value="GO_Central"/>
</dbReference>
<dbReference type="GO" id="GO:0005525">
    <property type="term" value="F:GTP binding"/>
    <property type="evidence" value="ECO:0007669"/>
    <property type="project" value="UniProtKB-KW"/>
</dbReference>
<dbReference type="GO" id="GO:0004475">
    <property type="term" value="F:mannose-1-phosphate guanylyltransferase (GTP) activity"/>
    <property type="evidence" value="ECO:0000314"/>
    <property type="project" value="AspGD"/>
</dbReference>
<dbReference type="GO" id="GO:0009298">
    <property type="term" value="P:GDP-mannose biosynthetic process"/>
    <property type="evidence" value="ECO:0000314"/>
    <property type="project" value="AspGD"/>
</dbReference>
<dbReference type="GO" id="GO:0006486">
    <property type="term" value="P:protein glycosylation"/>
    <property type="evidence" value="ECO:0000318"/>
    <property type="project" value="GO_Central"/>
</dbReference>
<dbReference type="GO" id="GO:0070590">
    <property type="term" value="P:spore wall biogenesis"/>
    <property type="evidence" value="ECO:0000315"/>
    <property type="project" value="AspGD"/>
</dbReference>
<dbReference type="CDD" id="cd05824">
    <property type="entry name" value="LbH_M1P_guanylylT_C"/>
    <property type="match status" value="1"/>
</dbReference>
<dbReference type="CDD" id="cd06425">
    <property type="entry name" value="M1P_guanylylT_B_like_N"/>
    <property type="match status" value="1"/>
</dbReference>
<dbReference type="FunFam" id="2.160.10.10:FF:000017">
    <property type="entry name" value="Mannose-1-phosphate guanyltransferase"/>
    <property type="match status" value="1"/>
</dbReference>
<dbReference type="FunFam" id="3.90.550.10:FF:000013">
    <property type="entry name" value="mannose-1-phosphate guanyltransferase beta"/>
    <property type="match status" value="1"/>
</dbReference>
<dbReference type="Gene3D" id="2.160.10.10">
    <property type="entry name" value="Hexapeptide repeat proteins"/>
    <property type="match status" value="1"/>
</dbReference>
<dbReference type="Gene3D" id="3.90.550.10">
    <property type="entry name" value="Spore Coat Polysaccharide Biosynthesis Protein SpsA, Chain A"/>
    <property type="match status" value="1"/>
</dbReference>
<dbReference type="InterPro" id="IPR056729">
    <property type="entry name" value="GMPPB_C"/>
</dbReference>
<dbReference type="InterPro" id="IPR045233">
    <property type="entry name" value="GMPPB_N"/>
</dbReference>
<dbReference type="InterPro" id="IPR018357">
    <property type="entry name" value="Hexapep_transf_CS"/>
</dbReference>
<dbReference type="InterPro" id="IPR050486">
    <property type="entry name" value="Mannose-1P_guanyltransferase"/>
</dbReference>
<dbReference type="InterPro" id="IPR005835">
    <property type="entry name" value="NTP_transferase_dom"/>
</dbReference>
<dbReference type="InterPro" id="IPR029044">
    <property type="entry name" value="Nucleotide-diphossugar_trans"/>
</dbReference>
<dbReference type="PANTHER" id="PTHR22572">
    <property type="entry name" value="SUGAR-1-PHOSPHATE GUANYL TRANSFERASE"/>
    <property type="match status" value="1"/>
</dbReference>
<dbReference type="Pfam" id="PF25087">
    <property type="entry name" value="GMPPB_C"/>
    <property type="match status" value="1"/>
</dbReference>
<dbReference type="Pfam" id="PF00483">
    <property type="entry name" value="NTP_transferase"/>
    <property type="match status" value="1"/>
</dbReference>
<dbReference type="SUPFAM" id="SSF53448">
    <property type="entry name" value="Nucleotide-diphospho-sugar transferases"/>
    <property type="match status" value="1"/>
</dbReference>
<dbReference type="PROSITE" id="PS00101">
    <property type="entry name" value="HEXAPEP_TRANSFERASES"/>
    <property type="match status" value="2"/>
</dbReference>
<reference key="1">
    <citation type="submission" date="2005-04" db="EMBL/GenBank/DDBJ databases">
        <authorList>
            <person name="Jiang H."/>
            <person name="Jin C."/>
        </authorList>
    </citation>
    <scope>NUCLEOTIDE SEQUENCE [MRNA]</scope>
    <source>
        <strain>YJ-407</strain>
    </source>
</reference>
<reference key="2">
    <citation type="journal article" date="2005" name="Nature">
        <title>Genomic sequence of the pathogenic and allergenic filamentous fungus Aspergillus fumigatus.</title>
        <authorList>
            <person name="Nierman W.C."/>
            <person name="Pain A."/>
            <person name="Anderson M.J."/>
            <person name="Wortman J.R."/>
            <person name="Kim H.S."/>
            <person name="Arroyo J."/>
            <person name="Berriman M."/>
            <person name="Abe K."/>
            <person name="Archer D.B."/>
            <person name="Bermejo C."/>
            <person name="Bennett J.W."/>
            <person name="Bowyer P."/>
            <person name="Chen D."/>
            <person name="Collins M."/>
            <person name="Coulsen R."/>
            <person name="Davies R."/>
            <person name="Dyer P.S."/>
            <person name="Farman M.L."/>
            <person name="Fedorova N."/>
            <person name="Fedorova N.D."/>
            <person name="Feldblyum T.V."/>
            <person name="Fischer R."/>
            <person name="Fosker N."/>
            <person name="Fraser A."/>
            <person name="Garcia J.L."/>
            <person name="Garcia M.J."/>
            <person name="Goble A."/>
            <person name="Goldman G.H."/>
            <person name="Gomi K."/>
            <person name="Griffith-Jones S."/>
            <person name="Gwilliam R."/>
            <person name="Haas B.J."/>
            <person name="Haas H."/>
            <person name="Harris D.E."/>
            <person name="Horiuchi H."/>
            <person name="Huang J."/>
            <person name="Humphray S."/>
            <person name="Jimenez J."/>
            <person name="Keller N."/>
            <person name="Khouri H."/>
            <person name="Kitamoto K."/>
            <person name="Kobayashi T."/>
            <person name="Konzack S."/>
            <person name="Kulkarni R."/>
            <person name="Kumagai T."/>
            <person name="Lafton A."/>
            <person name="Latge J.-P."/>
            <person name="Li W."/>
            <person name="Lord A."/>
            <person name="Lu C."/>
            <person name="Majoros W.H."/>
            <person name="May G.S."/>
            <person name="Miller B.L."/>
            <person name="Mohamoud Y."/>
            <person name="Molina M."/>
            <person name="Monod M."/>
            <person name="Mouyna I."/>
            <person name="Mulligan S."/>
            <person name="Murphy L.D."/>
            <person name="O'Neil S."/>
            <person name="Paulsen I."/>
            <person name="Penalva M.A."/>
            <person name="Pertea M."/>
            <person name="Price C."/>
            <person name="Pritchard B.L."/>
            <person name="Quail M.A."/>
            <person name="Rabbinowitsch E."/>
            <person name="Rawlins N."/>
            <person name="Rajandream M.A."/>
            <person name="Reichard U."/>
            <person name="Renauld H."/>
            <person name="Robson G.D."/>
            <person name="Rodriguez de Cordoba S."/>
            <person name="Rodriguez-Pena J.M."/>
            <person name="Ronning C.M."/>
            <person name="Rutter S."/>
            <person name="Salzberg S.L."/>
            <person name="Sanchez M."/>
            <person name="Sanchez-Ferrero J.C."/>
            <person name="Saunders D."/>
            <person name="Seeger K."/>
            <person name="Squares R."/>
            <person name="Squares S."/>
            <person name="Takeuchi M."/>
            <person name="Tekaia F."/>
            <person name="Turner G."/>
            <person name="Vazquez de Aldana C.R."/>
            <person name="Weidman J."/>
            <person name="White O."/>
            <person name="Woodward J.R."/>
            <person name="Yu J.-H."/>
            <person name="Fraser C.M."/>
            <person name="Galagan J.E."/>
            <person name="Asai K."/>
            <person name="Machida M."/>
            <person name="Hall N."/>
            <person name="Barrell B.G."/>
            <person name="Denning D.W."/>
        </authorList>
    </citation>
    <scope>NUCLEOTIDE SEQUENCE [LARGE SCALE GENOMIC DNA]</scope>
    <source>
        <strain>ATCC MYA-4609 / CBS 101355 / FGSC A1100 / Af293</strain>
    </source>
</reference>
<organism>
    <name type="scientific">Aspergillus fumigatus (strain ATCC MYA-4609 / CBS 101355 / FGSC A1100 / Af293)</name>
    <name type="common">Neosartorya fumigata</name>
    <dbReference type="NCBI Taxonomy" id="330879"/>
    <lineage>
        <taxon>Eukaryota</taxon>
        <taxon>Fungi</taxon>
        <taxon>Dikarya</taxon>
        <taxon>Ascomycota</taxon>
        <taxon>Pezizomycotina</taxon>
        <taxon>Eurotiomycetes</taxon>
        <taxon>Eurotiomycetidae</taxon>
        <taxon>Eurotiales</taxon>
        <taxon>Aspergillaceae</taxon>
        <taxon>Aspergillus</taxon>
        <taxon>Aspergillus subgen. Fumigati</taxon>
    </lineage>
</organism>
<evidence type="ECO:0000250" key="1"/>
<evidence type="ECO:0000305" key="2"/>
<proteinExistence type="evidence at transcript level"/>
<feature type="chain" id="PRO_0000238483" description="Mannose-1-phosphate guanyltransferase">
    <location>
        <begin position="1"/>
        <end position="364"/>
    </location>
</feature>
<protein>
    <recommendedName>
        <fullName>Mannose-1-phosphate guanyltransferase</fullName>
        <ecNumber>2.7.7.13</ecNumber>
    </recommendedName>
    <alternativeName>
        <fullName>GDP-mannose pyrophosphorylase</fullName>
    </alternativeName>
    <alternativeName>
        <fullName>GTP-mannose-1-phosphate guanylyltransferase</fullName>
    </alternativeName>
</protein>
<name>MPG1_ASPFU</name>
<gene>
    <name type="primary">mpg1</name>
    <name type="ORF">AFUA_4G11510</name>
</gene>
<accession>Q4U3E8</accession>
<accession>Q4WQ43</accession>
<sequence length="364" mass="40124">MKALILVGGFGTRLRPLTLTLPKPLVEFGNRPMILHQVESLAAAGVTDIVLAVNYRPDVMVAALKKYEEQYNVRIEFSVESEPLGTAGPLKLAEKILGKDDSPFFVLNSDIICDYPFKQLAEFHKKHGDEGTIVVTKVDEPSKYGVVVHKPNHPSRIDRFVEKPVEFVGNRINAGIYILNPSVLKRIELRPTSIEQETFPAICSDGQLHSFDLEGFWMDVGQPKDFLTGTCLYLTSLAKRNSKLLAPNSEPYVYGGNVMVDPSAKIGKNCRIGPNVVIGPNVVVGDGVRLQRCVLLENSKVKDHAWIKSTIVGWNSSVGKWARLENVTVLGDDVTIADEVYVNGGSILPHKSIKQNIDVPAIIM</sequence>
<keyword id="KW-0131">Cell cycle</keyword>
<keyword id="KW-0963">Cytoplasm</keyword>
<keyword id="KW-0342">GTP-binding</keyword>
<keyword id="KW-0547">Nucleotide-binding</keyword>
<keyword id="KW-0548">Nucleotidyltransferase</keyword>
<keyword id="KW-1185">Reference proteome</keyword>
<keyword id="KW-0808">Transferase</keyword>